<organismHost>
    <name type="scientific">Escherichia coli</name>
    <dbReference type="NCBI Taxonomy" id="562"/>
</organismHost>
<gene>
    <name type="primary">I</name>
</gene>
<organism>
    <name type="scientific">Enterobacteria phage f1</name>
    <name type="common">Bacteriophage f1</name>
    <dbReference type="NCBI Taxonomy" id="10863"/>
    <lineage>
        <taxon>Viruses</taxon>
        <taxon>Monodnaviria</taxon>
        <taxon>Loebvirae</taxon>
        <taxon>Hofneiviricota</taxon>
        <taxon>Faserviricetes</taxon>
        <taxon>Tubulavirales</taxon>
        <taxon>Inoviridae</taxon>
        <taxon>Inovirus</taxon>
        <taxon>Enterobacteria phage M13</taxon>
    </lineage>
</organism>
<feature type="chain" id="PRO_0000098201" description="Gene 1 protein">
    <location>
        <begin position="1"/>
        <end position="348"/>
    </location>
</feature>
<feature type="transmembrane region" description="Helical" evidence="1">
    <location>
        <begin position="254"/>
        <end position="270"/>
    </location>
</feature>
<feature type="binding site" evidence="1">
    <location>
        <begin position="8"/>
        <end position="15"/>
    </location>
    <ligand>
        <name>ATP</name>
        <dbReference type="ChEBI" id="CHEBI:30616"/>
    </ligand>
</feature>
<feature type="splice variant" id="VSP_037569" description="In isoform G11P." evidence="3">
    <location>
        <begin position="1"/>
        <end position="240"/>
    </location>
</feature>
<evidence type="ECO:0000255" key="1"/>
<evidence type="ECO:0000269" key="2">
    <source>
    </source>
</evidence>
<evidence type="ECO:0000305" key="3"/>
<reference key="1">
    <citation type="journal article" date="1981" name="Gene">
        <title>Nucleotide sequence and genome organisation of filamentous bacteriophages f1 and fd.</title>
        <authorList>
            <person name="Beck E."/>
            <person name="Zink B."/>
        </authorList>
    </citation>
    <scope>NUCLEOTIDE SEQUENCE [GENOMIC DNA]</scope>
</reference>
<reference key="2">
    <citation type="journal article" date="1982" name="J. Virol.">
        <title>Nucleotide sequence of bacteriophage f1 DNA.</title>
        <authorList>
            <person name="Hill D.F."/>
            <person name="Petersen G.B."/>
        </authorList>
    </citation>
    <scope>NUCLEOTIDE SEQUENCE [GENOMIC DNA]</scope>
</reference>
<reference key="3">
    <citation type="journal article" date="1999" name="Mol. Microbiol.">
        <title>A trans-envelope protein complex needed for filamentous phage assembly and export.</title>
        <authorList>
            <person name="Feng J.N."/>
            <person name="Model P."/>
            <person name="Russel M."/>
        </authorList>
    </citation>
    <scope>INTERACTION WITH G4P</scope>
</reference>
<keyword id="KW-0024">Alternative initiation</keyword>
<keyword id="KW-0067">ATP-binding</keyword>
<keyword id="KW-1043">Host membrane</keyword>
<keyword id="KW-0472">Membrane</keyword>
<keyword id="KW-0547">Nucleotide-binding</keyword>
<keyword id="KW-0812">Transmembrane</keyword>
<keyword id="KW-1133">Transmembrane helix</keyword>
<keyword id="KW-1249">Viral extrusion</keyword>
<keyword id="KW-1188">Viral release from host cell</keyword>
<proteinExistence type="evidence at protein level"/>
<name>G1P_BPF1</name>
<sequence length="348" mass="39528">MAVYFVTGKLGSGKTLVSVGKIQDKIVAGCKIATNLDLRLQNLPQVGRFAKTPRVLRIPDKPSISDLLAIGRGNDSYDENKNGLLVLDECGTWFNTRSWNDKERQPIIDWFLHARKLGWDIIFLVQDLSIVDKQARSALAENVVYCRRLDRITLPFVGTLYSLITGSKMPLPKLHVGVVKYGDSQLSPTVERWLYTGKNLYNAYDTKQAFSSNYDSGVYSYLTPYLSHGRYFKPLNLGQKMKLTKIYLKKFSRVLCLAIGFASAFTYSYITQPKPEVKKVVSQTYDFDKFTIDSSQRLNLSYRYVFKDSKGKLINSDDLQKQGYSLTYIDLCTVSIKKGNSNEIVKCN</sequence>
<comment type="function">
    <text>Isoform G1P plays an essential role in phage assembly. It is required to increase the number of adhesion zones between the inner and outer membranes of the host cell. The extrusion of neo-synthesized phages occurs at these adhesion sites. May be involved with G4P in creating zone through which the phage assembled and extruded.</text>
</comment>
<comment type="function">
    <text>Isoform G11P is also involved in phage assembly, probably playing a structural role in the formation of the phage assembly site.</text>
</comment>
<comment type="subunit">
    <text evidence="2">Interacts with G4P; this interaction results in a complex that spans the inner an outer host membranes.</text>
</comment>
<comment type="subcellular location">
    <subcellularLocation>
        <location evidence="3">Host membrane</location>
        <topology evidence="3">Single-pass membrane protein</topology>
    </subcellularLocation>
</comment>
<comment type="alternative products">
    <event type="alternative initiation"/>
    <isoform>
        <id>P03657-1</id>
        <name>G1P</name>
        <name>Gene 1 protein</name>
        <sequence type="displayed"/>
    </isoform>
    <isoform>
        <id>P03657-2</id>
        <name>G11P</name>
        <name>Gene 11 protein</name>
        <sequence type="described" ref="VSP_037569"/>
    </isoform>
</comment>
<comment type="similarity">
    <text evidence="3">Belongs to the inovirus G1P protein family.</text>
</comment>
<protein>
    <recommendedName>
        <fullName>Gene 1 protein</fullName>
    </recommendedName>
    <alternativeName>
        <fullName>G1P</fullName>
    </alternativeName>
</protein>
<accession>P03657</accession>
<dbReference type="EMBL" id="V00606">
    <property type="protein sequence ID" value="CAA23874.1"/>
    <property type="molecule type" value="Genomic_DNA"/>
</dbReference>
<dbReference type="EMBL" id="J02448">
    <property type="protein sequence ID" value="AAA32217.1"/>
    <property type="molecule type" value="Genomic_DNA"/>
</dbReference>
<dbReference type="PIR" id="C04262">
    <property type="entry name" value="Z1BPF1"/>
</dbReference>
<dbReference type="RefSeq" id="YP_010775832.1">
    <molecule id="P03657-1"/>
    <property type="nucleotide sequence ID" value="NC_075025.1"/>
</dbReference>
<dbReference type="RefSeq" id="YP_010775852.1">
    <molecule id="P03657-1"/>
    <property type="nucleotide sequence ID" value="NC_075027.1"/>
</dbReference>
<dbReference type="RefSeq" id="YP_010775862.1">
    <molecule id="P03657-1"/>
    <property type="nucleotide sequence ID" value="NC_075028.1"/>
</dbReference>
<dbReference type="RefSeq" id="YP_010775872.1">
    <molecule id="P03657-1"/>
    <property type="nucleotide sequence ID" value="NC_075029.1"/>
</dbReference>
<dbReference type="RefSeq" id="YP_010775882.1">
    <molecule id="P03657-1"/>
    <property type="nucleotide sequence ID" value="NC_075030.1"/>
</dbReference>
<dbReference type="RefSeq" id="YP_010775892.1">
    <molecule id="P03657-1"/>
    <property type="nucleotide sequence ID" value="NC_075031.1"/>
</dbReference>
<dbReference type="RefSeq" id="YP_010775902.1">
    <molecule id="P03657-1"/>
    <property type="nucleotide sequence ID" value="NC_075032.1"/>
</dbReference>
<dbReference type="RefSeq" id="YP_010775912.1">
    <molecule id="P03657-1"/>
    <property type="nucleotide sequence ID" value="NC_075033.1"/>
</dbReference>
<dbReference type="TCDB" id="3.A.13.1.1">
    <property type="family name" value="the filamentous phage exporter (fphe) family"/>
</dbReference>
<dbReference type="GeneID" id="80512432"/>
<dbReference type="GeneID" id="80512456"/>
<dbReference type="GeneID" id="80512467"/>
<dbReference type="GeneID" id="80512478"/>
<dbReference type="GeneID" id="80512488"/>
<dbReference type="GeneID" id="80512500"/>
<dbReference type="GeneID" id="80512511"/>
<dbReference type="GeneID" id="80512522"/>
<dbReference type="Proteomes" id="UP000002557">
    <property type="component" value="Genome"/>
</dbReference>
<dbReference type="Proteomes" id="UP000241027">
    <property type="component" value="Genome"/>
</dbReference>
<dbReference type="GO" id="GO:0033644">
    <property type="term" value="C:host cell membrane"/>
    <property type="evidence" value="ECO:0007669"/>
    <property type="project" value="UniProtKB-SubCell"/>
</dbReference>
<dbReference type="GO" id="GO:0016020">
    <property type="term" value="C:membrane"/>
    <property type="evidence" value="ECO:0007669"/>
    <property type="project" value="UniProtKB-KW"/>
</dbReference>
<dbReference type="GO" id="GO:0005524">
    <property type="term" value="F:ATP binding"/>
    <property type="evidence" value="ECO:0007669"/>
    <property type="project" value="UniProtKB-KW"/>
</dbReference>
<dbReference type="GO" id="GO:0099045">
    <property type="term" value="P:viral extrusion"/>
    <property type="evidence" value="ECO:0007669"/>
    <property type="project" value="UniProtKB-KW"/>
</dbReference>
<dbReference type="Gene3D" id="3.40.50.300">
    <property type="entry name" value="P-loop containing nucleotide triphosphate hydrolases"/>
    <property type="match status" value="1"/>
</dbReference>
<dbReference type="InterPro" id="IPR027417">
    <property type="entry name" value="P-loop_NTPase"/>
</dbReference>
<dbReference type="InterPro" id="IPR008900">
    <property type="entry name" value="Zot_N"/>
</dbReference>
<dbReference type="Pfam" id="PF05707">
    <property type="entry name" value="Zot"/>
    <property type="match status" value="1"/>
</dbReference>